<keyword id="KW-0119">Carbohydrate metabolism</keyword>
<keyword id="KW-0320">Glycogen biosynthesis</keyword>
<keyword id="KW-0321">Glycogen metabolism</keyword>
<keyword id="KW-0328">Glycosyltransferase</keyword>
<keyword id="KW-0614">Plasmid</keyword>
<keyword id="KW-0808">Transferase</keyword>
<gene>
    <name evidence="1" type="primary">glgB2</name>
    <name type="ordered locus">pRL120710</name>
</gene>
<organism>
    <name type="scientific">Rhizobium johnstonii (strain DSM 114642 / LMG 32736 / 3841)</name>
    <name type="common">Rhizobium leguminosarum bv. viciae</name>
    <dbReference type="NCBI Taxonomy" id="216596"/>
    <lineage>
        <taxon>Bacteria</taxon>
        <taxon>Pseudomonadati</taxon>
        <taxon>Pseudomonadota</taxon>
        <taxon>Alphaproteobacteria</taxon>
        <taxon>Hyphomicrobiales</taxon>
        <taxon>Rhizobiaceae</taxon>
        <taxon>Rhizobium/Agrobacterium group</taxon>
        <taxon>Rhizobium</taxon>
        <taxon>Rhizobium johnstonii</taxon>
    </lineage>
</organism>
<accession>Q1M3A7</accession>
<protein>
    <recommendedName>
        <fullName evidence="1">1,4-alpha-glucan branching enzyme GlgB 2</fullName>
        <ecNumber evidence="1">2.4.1.18</ecNumber>
    </recommendedName>
    <alternativeName>
        <fullName evidence="1">1,4-alpha-D-glucan:1,4-alpha-D-glucan 6-glucosyl-transferase 2</fullName>
    </alternativeName>
    <alternativeName>
        <fullName evidence="1">Alpha-(1-&gt;4)-glucan branching enzyme 2</fullName>
    </alternativeName>
    <alternativeName>
        <fullName evidence="1">Glycogen branching enzyme 2</fullName>
        <shortName evidence="1">BE 2</shortName>
    </alternativeName>
</protein>
<comment type="function">
    <text evidence="1">Catalyzes the formation of the alpha-1,6-glucosidic linkages in glycogen by scission of a 1,4-alpha-linked oligosaccharide from growing alpha-1,4-glucan chains and the subsequent attachment of the oligosaccharide to the alpha-1,6 position.</text>
</comment>
<comment type="catalytic activity">
    <reaction evidence="1">
        <text>Transfers a segment of a (1-&gt;4)-alpha-D-glucan chain to a primary hydroxy group in a similar glucan chain.</text>
        <dbReference type="EC" id="2.4.1.18"/>
    </reaction>
</comment>
<comment type="pathway">
    <text evidence="1">Glycan biosynthesis; glycogen biosynthesis.</text>
</comment>
<comment type="subunit">
    <text evidence="1">Monomer.</text>
</comment>
<comment type="similarity">
    <text evidence="1">Belongs to the glycosyl hydrolase 13 family. GlgB subfamily.</text>
</comment>
<proteinExistence type="inferred from homology"/>
<geneLocation type="plasmid">
    <name>pRL12</name>
</geneLocation>
<name>GLGB2_RHIJ3</name>
<evidence type="ECO:0000255" key="1">
    <source>
        <dbReference type="HAMAP-Rule" id="MF_00685"/>
    </source>
</evidence>
<sequence>MNVERSELLAGIGQDALWALIEGRHGDPFSILGPHQSGGMTIVRVYLPGAEAVDLIDATSGRVVAPFSIAHPSGLFAATVASRTGYRLRITWPDAVQITEDPYSFGLLLGELDLHLISEGTHYSLSRTLGAVAMSIDGISGVRFAVWAPNARRVSVVGDFNAWDGRRNPMRLRPSAGVWELFIPRLAPGERYKFEIVDAEGTCLPQKADPVARASEAAPSTASIVASSTPFRWTDDGWMKGRSRQDRLEGAFSVYEVHVGSWLRDQKDGNRSLDWVELSQRLVPYVSDMGFTHIELLPIMEHPFGGSWGYQPLGLFAPTGRYGTPEDFAYFVDRCHGAGLGVILDWVPAHFPTDVWGLARFDGSALYEHEDPREGFHRDWNTLIYNLGRNEVKGFLIASALEWLERYHIDGLRVDAVASMLYRDYSRNEGEWIPNQYGGRENLEAVEFFKHLNSIIHERCPHAMTIAEESTAWPGVTKPPEQGGLGFDIKWNMGWMHDSLSYIEKDPIYRSYAHGTMTFGMIYAYSERFILPISHDEVVYGKGSLLTKMPGDEWQKFANLRSYLAFMWGHPGKKLLFMGSEIAQPSEWNHDGSVTWDVLDQPQHVGIQRLVKDLNGLYGDEPALQFGDFHSEGFEWAAADDAVNSVLGMLRYAPDRASSVLVMSNFTPVPRYGYRIGVPSDGVWIERITTDAREYGGSGLVNGAVSSEPVPAHGRPVSLSLTLPPLSTIFLQGPSP</sequence>
<dbReference type="EC" id="2.4.1.18" evidence="1"/>
<dbReference type="EMBL" id="AM236086">
    <property type="protein sequence ID" value="CAK12419.1"/>
    <property type="molecule type" value="Genomic_DNA"/>
</dbReference>
<dbReference type="SMR" id="Q1M3A7"/>
<dbReference type="CAZy" id="CBM48">
    <property type="family name" value="Carbohydrate-Binding Module Family 48"/>
</dbReference>
<dbReference type="CAZy" id="GH13">
    <property type="family name" value="Glycoside Hydrolase Family 13"/>
</dbReference>
<dbReference type="EnsemblBacteria" id="CAK12419">
    <property type="protein sequence ID" value="CAK12419"/>
    <property type="gene ID" value="pRL120710"/>
</dbReference>
<dbReference type="KEGG" id="rle:pRL120710"/>
<dbReference type="eggNOG" id="COG0296">
    <property type="taxonomic scope" value="Bacteria"/>
</dbReference>
<dbReference type="HOGENOM" id="CLU_004245_3_2_5"/>
<dbReference type="UniPathway" id="UPA00164"/>
<dbReference type="Proteomes" id="UP000006575">
    <property type="component" value="Plasmid pRL12"/>
</dbReference>
<dbReference type="GO" id="GO:0005829">
    <property type="term" value="C:cytosol"/>
    <property type="evidence" value="ECO:0007669"/>
    <property type="project" value="TreeGrafter"/>
</dbReference>
<dbReference type="GO" id="GO:0003844">
    <property type="term" value="F:1,4-alpha-glucan branching enzyme activity"/>
    <property type="evidence" value="ECO:0007669"/>
    <property type="project" value="UniProtKB-UniRule"/>
</dbReference>
<dbReference type="GO" id="GO:0043169">
    <property type="term" value="F:cation binding"/>
    <property type="evidence" value="ECO:0007669"/>
    <property type="project" value="InterPro"/>
</dbReference>
<dbReference type="GO" id="GO:0004553">
    <property type="term" value="F:hydrolase activity, hydrolyzing O-glycosyl compounds"/>
    <property type="evidence" value="ECO:0007669"/>
    <property type="project" value="InterPro"/>
</dbReference>
<dbReference type="GO" id="GO:0005978">
    <property type="term" value="P:glycogen biosynthetic process"/>
    <property type="evidence" value="ECO:0007669"/>
    <property type="project" value="UniProtKB-UniRule"/>
</dbReference>
<dbReference type="CDD" id="cd11322">
    <property type="entry name" value="AmyAc_Glg_BE"/>
    <property type="match status" value="1"/>
</dbReference>
<dbReference type="CDD" id="cd02855">
    <property type="entry name" value="E_set_GBE_prok_N"/>
    <property type="match status" value="1"/>
</dbReference>
<dbReference type="FunFam" id="2.60.40.10:FF:000169">
    <property type="entry name" value="1,4-alpha-glucan branching enzyme GlgB"/>
    <property type="match status" value="1"/>
</dbReference>
<dbReference type="FunFam" id="2.60.40.1180:FF:000002">
    <property type="entry name" value="1,4-alpha-glucan branching enzyme GlgB"/>
    <property type="match status" value="1"/>
</dbReference>
<dbReference type="FunFam" id="3.20.20.80:FF:000003">
    <property type="entry name" value="1,4-alpha-glucan branching enzyme GlgB"/>
    <property type="match status" value="1"/>
</dbReference>
<dbReference type="Gene3D" id="3.20.20.80">
    <property type="entry name" value="Glycosidases"/>
    <property type="match status" value="1"/>
</dbReference>
<dbReference type="Gene3D" id="2.60.40.1180">
    <property type="entry name" value="Golgi alpha-mannosidase II"/>
    <property type="match status" value="1"/>
</dbReference>
<dbReference type="Gene3D" id="2.60.40.10">
    <property type="entry name" value="Immunoglobulins"/>
    <property type="match status" value="1"/>
</dbReference>
<dbReference type="HAMAP" id="MF_00685">
    <property type="entry name" value="GlgB"/>
    <property type="match status" value="1"/>
</dbReference>
<dbReference type="InterPro" id="IPR006048">
    <property type="entry name" value="A-amylase/branching_C"/>
</dbReference>
<dbReference type="InterPro" id="IPR037439">
    <property type="entry name" value="Branching_enzy"/>
</dbReference>
<dbReference type="InterPro" id="IPR006407">
    <property type="entry name" value="GlgB"/>
</dbReference>
<dbReference type="InterPro" id="IPR054169">
    <property type="entry name" value="GlgB_N"/>
</dbReference>
<dbReference type="InterPro" id="IPR044143">
    <property type="entry name" value="GlgB_N_E_set_prok"/>
</dbReference>
<dbReference type="InterPro" id="IPR006047">
    <property type="entry name" value="Glyco_hydro_13_cat_dom"/>
</dbReference>
<dbReference type="InterPro" id="IPR004193">
    <property type="entry name" value="Glyco_hydro_13_N"/>
</dbReference>
<dbReference type="InterPro" id="IPR013780">
    <property type="entry name" value="Glyco_hydro_b"/>
</dbReference>
<dbReference type="InterPro" id="IPR017853">
    <property type="entry name" value="Glycoside_hydrolase_SF"/>
</dbReference>
<dbReference type="InterPro" id="IPR013783">
    <property type="entry name" value="Ig-like_fold"/>
</dbReference>
<dbReference type="InterPro" id="IPR014756">
    <property type="entry name" value="Ig_E-set"/>
</dbReference>
<dbReference type="NCBIfam" id="TIGR01515">
    <property type="entry name" value="branching_enzym"/>
    <property type="match status" value="1"/>
</dbReference>
<dbReference type="NCBIfam" id="NF003811">
    <property type="entry name" value="PRK05402.1"/>
    <property type="match status" value="1"/>
</dbReference>
<dbReference type="NCBIfam" id="NF008967">
    <property type="entry name" value="PRK12313.1"/>
    <property type="match status" value="1"/>
</dbReference>
<dbReference type="PANTHER" id="PTHR43651">
    <property type="entry name" value="1,4-ALPHA-GLUCAN-BRANCHING ENZYME"/>
    <property type="match status" value="1"/>
</dbReference>
<dbReference type="PANTHER" id="PTHR43651:SF3">
    <property type="entry name" value="1,4-ALPHA-GLUCAN-BRANCHING ENZYME"/>
    <property type="match status" value="1"/>
</dbReference>
<dbReference type="Pfam" id="PF00128">
    <property type="entry name" value="Alpha-amylase"/>
    <property type="match status" value="1"/>
</dbReference>
<dbReference type="Pfam" id="PF02806">
    <property type="entry name" value="Alpha-amylase_C"/>
    <property type="match status" value="1"/>
</dbReference>
<dbReference type="Pfam" id="PF02922">
    <property type="entry name" value="CBM_48"/>
    <property type="match status" value="1"/>
</dbReference>
<dbReference type="Pfam" id="PF22019">
    <property type="entry name" value="GlgB_N"/>
    <property type="match status" value="1"/>
</dbReference>
<dbReference type="PIRSF" id="PIRSF000463">
    <property type="entry name" value="GlgB"/>
    <property type="match status" value="1"/>
</dbReference>
<dbReference type="SMART" id="SM00642">
    <property type="entry name" value="Aamy"/>
    <property type="match status" value="1"/>
</dbReference>
<dbReference type="SUPFAM" id="SSF51445">
    <property type="entry name" value="(Trans)glycosidases"/>
    <property type="match status" value="1"/>
</dbReference>
<dbReference type="SUPFAM" id="SSF81296">
    <property type="entry name" value="E set domains"/>
    <property type="match status" value="2"/>
</dbReference>
<dbReference type="SUPFAM" id="SSF51011">
    <property type="entry name" value="Glycosyl hydrolase domain"/>
    <property type="match status" value="1"/>
</dbReference>
<feature type="chain" id="PRO_0000260685" description="1,4-alpha-glucan branching enzyme GlgB 2">
    <location>
        <begin position="1"/>
        <end position="736"/>
    </location>
</feature>
<feature type="active site" description="Nucleophile" evidence="1">
    <location>
        <position position="415"/>
    </location>
</feature>
<feature type="active site" description="Proton donor" evidence="1">
    <location>
        <position position="468"/>
    </location>
</feature>
<reference key="1">
    <citation type="journal article" date="2006" name="Genome Biol.">
        <title>The genome of Rhizobium leguminosarum has recognizable core and accessory components.</title>
        <authorList>
            <person name="Young J.P.W."/>
            <person name="Crossman L.C."/>
            <person name="Johnston A.W.B."/>
            <person name="Thomson N.R."/>
            <person name="Ghazoui Z.F."/>
            <person name="Hull K.H."/>
            <person name="Wexler M."/>
            <person name="Curson A.R.J."/>
            <person name="Todd J.D."/>
            <person name="Poole P.S."/>
            <person name="Mauchline T.H."/>
            <person name="East A.K."/>
            <person name="Quail M.A."/>
            <person name="Churcher C."/>
            <person name="Arrowsmith C."/>
            <person name="Cherevach I."/>
            <person name="Chillingworth T."/>
            <person name="Clarke K."/>
            <person name="Cronin A."/>
            <person name="Davis P."/>
            <person name="Fraser A."/>
            <person name="Hance Z."/>
            <person name="Hauser H."/>
            <person name="Jagels K."/>
            <person name="Moule S."/>
            <person name="Mungall K."/>
            <person name="Norbertczak H."/>
            <person name="Rabbinowitsch E."/>
            <person name="Sanders M."/>
            <person name="Simmonds M."/>
            <person name="Whitehead S."/>
            <person name="Parkhill J."/>
        </authorList>
    </citation>
    <scope>NUCLEOTIDE SEQUENCE [LARGE SCALE GENOMIC DNA]</scope>
    <source>
        <strain>DSM 114642 / LMG 32736 / 3841</strain>
    </source>
</reference>